<feature type="chain" id="PRO_0000203087" description="Putative uncharacterized protein YJR020W">
    <location>
        <begin position="1"/>
        <end position="110"/>
    </location>
</feature>
<accession>P47092</accession>
<evidence type="ECO:0000305" key="1">
    <source>
    </source>
</evidence>
<name>YJZ0_YEAST</name>
<reference key="1">
    <citation type="journal article" date="1996" name="EMBO J.">
        <title>Complete nucleotide sequence of Saccharomyces cerevisiae chromosome X.</title>
        <authorList>
            <person name="Galibert F."/>
            <person name="Alexandraki D."/>
            <person name="Baur A."/>
            <person name="Boles E."/>
            <person name="Chalwatzis N."/>
            <person name="Chuat J.-C."/>
            <person name="Coster F."/>
            <person name="Cziepluch C."/>
            <person name="de Haan M."/>
            <person name="Domdey H."/>
            <person name="Durand P."/>
            <person name="Entian K.-D."/>
            <person name="Gatius M."/>
            <person name="Goffeau A."/>
            <person name="Grivell L.A."/>
            <person name="Hennemann A."/>
            <person name="Herbert C.J."/>
            <person name="Heumann K."/>
            <person name="Hilger F."/>
            <person name="Hollenberg C.P."/>
            <person name="Huang M.-E."/>
            <person name="Jacq C."/>
            <person name="Jauniaux J.-C."/>
            <person name="Katsoulou C."/>
            <person name="Kirchrath L."/>
            <person name="Kleine K."/>
            <person name="Kordes E."/>
            <person name="Koetter P."/>
            <person name="Liebl S."/>
            <person name="Louis E.J."/>
            <person name="Manus V."/>
            <person name="Mewes H.-W."/>
            <person name="Miosga T."/>
            <person name="Obermaier B."/>
            <person name="Perea J."/>
            <person name="Pohl T.M."/>
            <person name="Portetelle D."/>
            <person name="Pujol A."/>
            <person name="Purnelle B."/>
            <person name="Ramezani Rad M."/>
            <person name="Rasmussen S.W."/>
            <person name="Rose M."/>
            <person name="Rossau R."/>
            <person name="Schaaff-Gerstenschlaeger I."/>
            <person name="Smits P.H.M."/>
            <person name="Scarcez T."/>
            <person name="Soriano N."/>
            <person name="To Van D."/>
            <person name="Tzermia M."/>
            <person name="Van Broekhoven A."/>
            <person name="Vandenbol M."/>
            <person name="Wedler H."/>
            <person name="von Wettstein D."/>
            <person name="Wambutt R."/>
            <person name="Zagulski M."/>
            <person name="Zollner A."/>
            <person name="Karpfinger-Hartl L."/>
        </authorList>
    </citation>
    <scope>NUCLEOTIDE SEQUENCE [LARGE SCALE GENOMIC DNA]</scope>
    <source>
        <strain>ATCC 204508 / S288c</strain>
    </source>
</reference>
<reference key="2">
    <citation type="journal article" date="2014" name="G3 (Bethesda)">
        <title>The reference genome sequence of Saccharomyces cerevisiae: Then and now.</title>
        <authorList>
            <person name="Engel S.R."/>
            <person name="Dietrich F.S."/>
            <person name="Fisk D.G."/>
            <person name="Binkley G."/>
            <person name="Balakrishnan R."/>
            <person name="Costanzo M.C."/>
            <person name="Dwight S.S."/>
            <person name="Hitz B.C."/>
            <person name="Karra K."/>
            <person name="Nash R.S."/>
            <person name="Weng S."/>
            <person name="Wong E.D."/>
            <person name="Lloyd P."/>
            <person name="Skrzypek M.S."/>
            <person name="Miyasato S.R."/>
            <person name="Simison M."/>
            <person name="Cherry J.M."/>
        </authorList>
    </citation>
    <scope>GENOME REANNOTATION</scope>
    <source>
        <strain>ATCC 204508 / S288c</strain>
    </source>
</reference>
<gene>
    <name type="ordered locus">YJR020W</name>
    <name type="ORF">J1458</name>
    <name type="ORF">YJR83.15</name>
</gene>
<proteinExistence type="uncertain"/>
<comment type="caution">
    <text evidence="1">Product of a dubious gene prediction unlikely to encode a functional protein. Because of that it is not part of the S.cerevisiae S288c complete/reference proteome set.</text>
</comment>
<dbReference type="EMBL" id="X87611">
    <property type="protein sequence ID" value="CAA60942.1"/>
    <property type="molecule type" value="Genomic_DNA"/>
</dbReference>
<dbReference type="EMBL" id="Z49519">
    <property type="protein sequence ID" value="CAA89544.1"/>
    <property type="molecule type" value="Genomic_DNA"/>
</dbReference>
<dbReference type="PIR" id="S55208">
    <property type="entry name" value="S55208"/>
</dbReference>
<dbReference type="DIP" id="DIP-4357N"/>
<dbReference type="PaxDb" id="4932-YJR020W"/>
<dbReference type="EnsemblFungi" id="YJR020W_mRNA">
    <property type="protein sequence ID" value="YJR020W"/>
    <property type="gene ID" value="YJR020W"/>
</dbReference>
<dbReference type="AGR" id="SGD:S000003781"/>
<dbReference type="SGD" id="S000003781">
    <property type="gene designation" value="YJR020W"/>
</dbReference>
<dbReference type="HOGENOM" id="CLU_2173009_0_0_1"/>
<sequence>MKFLPFLRFCTWYVILVRGSPPLMKYECSDVGKKFNGTVCNDASSDCDTSVPPKVPLDPTGAAGRYFVTKLVGERGTSSNIFSRLDMAILEALIFMQSCLILSCSWWILN</sequence>
<protein>
    <recommendedName>
        <fullName>Putative uncharacterized protein YJR020W</fullName>
    </recommendedName>
</protein>
<organism>
    <name type="scientific">Saccharomyces cerevisiae (strain ATCC 204508 / S288c)</name>
    <name type="common">Baker's yeast</name>
    <dbReference type="NCBI Taxonomy" id="559292"/>
    <lineage>
        <taxon>Eukaryota</taxon>
        <taxon>Fungi</taxon>
        <taxon>Dikarya</taxon>
        <taxon>Ascomycota</taxon>
        <taxon>Saccharomycotina</taxon>
        <taxon>Saccharomycetes</taxon>
        <taxon>Saccharomycetales</taxon>
        <taxon>Saccharomycetaceae</taxon>
        <taxon>Saccharomyces</taxon>
    </lineage>
</organism>